<comment type="function">
    <text evidence="1">Formation of pseudouridine at positions 38, 39 and 40 in the anticodon stem and loop of transfer RNAs.</text>
</comment>
<comment type="catalytic activity">
    <reaction evidence="1">
        <text>uridine(38/39/40) in tRNA = pseudouridine(38/39/40) in tRNA</text>
        <dbReference type="Rhea" id="RHEA:22376"/>
        <dbReference type="Rhea" id="RHEA-COMP:10085"/>
        <dbReference type="Rhea" id="RHEA-COMP:10087"/>
        <dbReference type="ChEBI" id="CHEBI:65314"/>
        <dbReference type="ChEBI" id="CHEBI:65315"/>
        <dbReference type="EC" id="5.4.99.12"/>
    </reaction>
</comment>
<comment type="subunit">
    <text evidence="1">Homodimer.</text>
</comment>
<comment type="similarity">
    <text evidence="1">Belongs to the tRNA pseudouridine synthase TruA family.</text>
</comment>
<keyword id="KW-0413">Isomerase</keyword>
<keyword id="KW-0819">tRNA processing</keyword>
<sequence>MKRVALLVQYDGYHYSGWQKQKNATTVQEILESALFKITNHTVKTFAAGRTDAGVHASGQVVHFDIDSVIPGFSYSNILNNLLPSTIRILESVEVKNSWHACYSAVYRHYRYVINNGKFPNLFINNWSWHRYQKVLDEVLMLHASKTMEGEHDFFAFQKSGSNRRNSVTLIKNIDIKRVEDLILVDIKATGFLYGMVRLIVGQLVLVGEKKISSDIFIDRWVNKKKNDVKESAPAKGLCFVNAVYEENVFKKVNNNDFFPLFLINGFS</sequence>
<evidence type="ECO:0000255" key="1">
    <source>
        <dbReference type="HAMAP-Rule" id="MF_00171"/>
    </source>
</evidence>
<feature type="chain" id="PRO_1000058309" description="tRNA pseudouridine synthase A">
    <location>
        <begin position="1"/>
        <end position="268"/>
    </location>
</feature>
<feature type="active site" description="Nucleophile" evidence="1">
    <location>
        <position position="52"/>
    </location>
</feature>
<feature type="binding site" evidence="1">
    <location>
        <position position="110"/>
    </location>
    <ligand>
        <name>substrate</name>
    </ligand>
</feature>
<gene>
    <name evidence="1" type="primary">truA</name>
    <name type="ordered locus">P9215_18051</name>
</gene>
<reference key="1">
    <citation type="journal article" date="2007" name="PLoS Genet.">
        <title>Patterns and implications of gene gain and loss in the evolution of Prochlorococcus.</title>
        <authorList>
            <person name="Kettler G.C."/>
            <person name="Martiny A.C."/>
            <person name="Huang K."/>
            <person name="Zucker J."/>
            <person name="Coleman M.L."/>
            <person name="Rodrigue S."/>
            <person name="Chen F."/>
            <person name="Lapidus A."/>
            <person name="Ferriera S."/>
            <person name="Johnson J."/>
            <person name="Steglich C."/>
            <person name="Church G.M."/>
            <person name="Richardson P."/>
            <person name="Chisholm S.W."/>
        </authorList>
    </citation>
    <scope>NUCLEOTIDE SEQUENCE [LARGE SCALE GENOMIC DNA]</scope>
    <source>
        <strain>MIT 9215</strain>
    </source>
</reference>
<protein>
    <recommendedName>
        <fullName evidence="1">tRNA pseudouridine synthase A</fullName>
        <ecNumber evidence="1">5.4.99.12</ecNumber>
    </recommendedName>
    <alternativeName>
        <fullName evidence="1">tRNA pseudouridine(38-40) synthase</fullName>
    </alternativeName>
    <alternativeName>
        <fullName evidence="1">tRNA pseudouridylate synthase I</fullName>
    </alternativeName>
    <alternativeName>
        <fullName evidence="1">tRNA-uridine isomerase I</fullName>
    </alternativeName>
</protein>
<name>TRUA_PROM2</name>
<organism>
    <name type="scientific">Prochlorococcus marinus (strain MIT 9215)</name>
    <dbReference type="NCBI Taxonomy" id="93060"/>
    <lineage>
        <taxon>Bacteria</taxon>
        <taxon>Bacillati</taxon>
        <taxon>Cyanobacteriota</taxon>
        <taxon>Cyanophyceae</taxon>
        <taxon>Synechococcales</taxon>
        <taxon>Prochlorococcaceae</taxon>
        <taxon>Prochlorococcus</taxon>
    </lineage>
</organism>
<proteinExistence type="inferred from homology"/>
<dbReference type="EC" id="5.4.99.12" evidence="1"/>
<dbReference type="EMBL" id="CP000825">
    <property type="protein sequence ID" value="ABV51418.1"/>
    <property type="molecule type" value="Genomic_DNA"/>
</dbReference>
<dbReference type="RefSeq" id="WP_012008431.1">
    <property type="nucleotide sequence ID" value="NC_009840.1"/>
</dbReference>
<dbReference type="SMR" id="A8G737"/>
<dbReference type="STRING" id="93060.P9215_18051"/>
<dbReference type="KEGG" id="pmh:P9215_18051"/>
<dbReference type="eggNOG" id="COG0101">
    <property type="taxonomic scope" value="Bacteria"/>
</dbReference>
<dbReference type="HOGENOM" id="CLU_014673_0_1_3"/>
<dbReference type="OrthoDB" id="9811823at2"/>
<dbReference type="Proteomes" id="UP000002014">
    <property type="component" value="Chromosome"/>
</dbReference>
<dbReference type="GO" id="GO:0003723">
    <property type="term" value="F:RNA binding"/>
    <property type="evidence" value="ECO:0007669"/>
    <property type="project" value="InterPro"/>
</dbReference>
<dbReference type="GO" id="GO:0160147">
    <property type="term" value="F:tRNA pseudouridine(38-40) synthase activity"/>
    <property type="evidence" value="ECO:0007669"/>
    <property type="project" value="UniProtKB-EC"/>
</dbReference>
<dbReference type="GO" id="GO:0031119">
    <property type="term" value="P:tRNA pseudouridine synthesis"/>
    <property type="evidence" value="ECO:0007669"/>
    <property type="project" value="UniProtKB-UniRule"/>
</dbReference>
<dbReference type="CDD" id="cd02570">
    <property type="entry name" value="PseudoU_synth_EcTruA"/>
    <property type="match status" value="1"/>
</dbReference>
<dbReference type="FunFam" id="3.30.70.580:FF:000001">
    <property type="entry name" value="tRNA pseudouridine synthase A"/>
    <property type="match status" value="1"/>
</dbReference>
<dbReference type="Gene3D" id="3.30.70.660">
    <property type="entry name" value="Pseudouridine synthase I, catalytic domain, C-terminal subdomain"/>
    <property type="match status" value="1"/>
</dbReference>
<dbReference type="Gene3D" id="3.30.70.580">
    <property type="entry name" value="Pseudouridine synthase I, catalytic domain, N-terminal subdomain"/>
    <property type="match status" value="1"/>
</dbReference>
<dbReference type="HAMAP" id="MF_00171">
    <property type="entry name" value="TruA"/>
    <property type="match status" value="1"/>
</dbReference>
<dbReference type="InterPro" id="IPR020103">
    <property type="entry name" value="PsdUridine_synth_cat_dom_sf"/>
</dbReference>
<dbReference type="InterPro" id="IPR001406">
    <property type="entry name" value="PsdUridine_synth_TruA"/>
</dbReference>
<dbReference type="InterPro" id="IPR020097">
    <property type="entry name" value="PsdUridine_synth_TruA_a/b_dom"/>
</dbReference>
<dbReference type="InterPro" id="IPR020095">
    <property type="entry name" value="PsdUridine_synth_TruA_C"/>
</dbReference>
<dbReference type="InterPro" id="IPR020094">
    <property type="entry name" value="TruA/RsuA/RluB/E/F_N"/>
</dbReference>
<dbReference type="NCBIfam" id="TIGR00071">
    <property type="entry name" value="hisT_truA"/>
    <property type="match status" value="1"/>
</dbReference>
<dbReference type="PANTHER" id="PTHR11142">
    <property type="entry name" value="PSEUDOURIDYLATE SYNTHASE"/>
    <property type="match status" value="1"/>
</dbReference>
<dbReference type="PANTHER" id="PTHR11142:SF0">
    <property type="entry name" value="TRNA PSEUDOURIDINE SYNTHASE-LIKE 1"/>
    <property type="match status" value="1"/>
</dbReference>
<dbReference type="Pfam" id="PF01416">
    <property type="entry name" value="PseudoU_synth_1"/>
    <property type="match status" value="2"/>
</dbReference>
<dbReference type="PIRSF" id="PIRSF001430">
    <property type="entry name" value="tRNA_psdUrid_synth"/>
    <property type="match status" value="1"/>
</dbReference>
<dbReference type="SUPFAM" id="SSF55120">
    <property type="entry name" value="Pseudouridine synthase"/>
    <property type="match status" value="1"/>
</dbReference>
<accession>A8G737</accession>